<reference key="1">
    <citation type="journal article" date="2005" name="Proc. Natl. Acad. Sci. U.S.A.">
        <title>The complete genome sequence of Mycobacterium avium subspecies paratuberculosis.</title>
        <authorList>
            <person name="Li L."/>
            <person name="Bannantine J.P."/>
            <person name="Zhang Q."/>
            <person name="Amonsin A."/>
            <person name="May B.J."/>
            <person name="Alt D."/>
            <person name="Banerji N."/>
            <person name="Kanjilal S."/>
            <person name="Kapur V."/>
        </authorList>
    </citation>
    <scope>NUCLEOTIDE SEQUENCE [LARGE SCALE GENOMIC DNA]</scope>
    <source>
        <strain>ATCC BAA-968 / K-10</strain>
    </source>
</reference>
<feature type="chain" id="PRO_0000190599" description="4-hydroxy-3-methylbut-2-en-1-yl diphosphate synthase (flavodoxin)">
    <location>
        <begin position="1"/>
        <end position="388"/>
    </location>
</feature>
<feature type="region of interest" description="Disordered" evidence="2">
    <location>
        <begin position="369"/>
        <end position="388"/>
    </location>
</feature>
<feature type="compositionally biased region" description="Polar residues" evidence="2">
    <location>
        <begin position="377"/>
        <end position="388"/>
    </location>
</feature>
<feature type="binding site" evidence="1">
    <location>
        <position position="280"/>
    </location>
    <ligand>
        <name>[4Fe-4S] cluster</name>
        <dbReference type="ChEBI" id="CHEBI:49883"/>
    </ligand>
</feature>
<feature type="binding site" evidence="1">
    <location>
        <position position="283"/>
    </location>
    <ligand>
        <name>[4Fe-4S] cluster</name>
        <dbReference type="ChEBI" id="CHEBI:49883"/>
    </ligand>
</feature>
<feature type="binding site" evidence="1">
    <location>
        <position position="315"/>
    </location>
    <ligand>
        <name>[4Fe-4S] cluster</name>
        <dbReference type="ChEBI" id="CHEBI:49883"/>
    </ligand>
</feature>
<feature type="binding site" evidence="1">
    <location>
        <position position="322"/>
    </location>
    <ligand>
        <name>[4Fe-4S] cluster</name>
        <dbReference type="ChEBI" id="CHEBI:49883"/>
    </ligand>
</feature>
<accession>Q73VS3</accession>
<comment type="function">
    <text evidence="1">Converts 2C-methyl-D-erythritol 2,4-cyclodiphosphate (ME-2,4cPP) into 1-hydroxy-2-methyl-2-(E)-butenyl 4-diphosphate.</text>
</comment>
<comment type="catalytic activity">
    <reaction evidence="1">
        <text>(2E)-4-hydroxy-3-methylbut-2-enyl diphosphate + oxidized [flavodoxin] + H2O + 2 H(+) = 2-C-methyl-D-erythritol 2,4-cyclic diphosphate + reduced [flavodoxin]</text>
        <dbReference type="Rhea" id="RHEA:43604"/>
        <dbReference type="Rhea" id="RHEA-COMP:10622"/>
        <dbReference type="Rhea" id="RHEA-COMP:10623"/>
        <dbReference type="ChEBI" id="CHEBI:15377"/>
        <dbReference type="ChEBI" id="CHEBI:15378"/>
        <dbReference type="ChEBI" id="CHEBI:57618"/>
        <dbReference type="ChEBI" id="CHEBI:58210"/>
        <dbReference type="ChEBI" id="CHEBI:58483"/>
        <dbReference type="ChEBI" id="CHEBI:128753"/>
        <dbReference type="EC" id="1.17.7.3"/>
    </reaction>
</comment>
<comment type="cofactor">
    <cofactor evidence="1">
        <name>[4Fe-4S] cluster</name>
        <dbReference type="ChEBI" id="CHEBI:49883"/>
    </cofactor>
    <text evidence="1">Binds 1 [4Fe-4S] cluster.</text>
</comment>
<comment type="pathway">
    <text evidence="1">Isoprenoid biosynthesis; isopentenyl diphosphate biosynthesis via DXP pathway; isopentenyl diphosphate from 1-deoxy-D-xylulose 5-phosphate: step 5/6.</text>
</comment>
<comment type="similarity">
    <text evidence="1">Belongs to the IspG family.</text>
</comment>
<keyword id="KW-0004">4Fe-4S</keyword>
<keyword id="KW-0408">Iron</keyword>
<keyword id="KW-0411">Iron-sulfur</keyword>
<keyword id="KW-0414">Isoprene biosynthesis</keyword>
<keyword id="KW-0479">Metal-binding</keyword>
<keyword id="KW-0560">Oxidoreductase</keyword>
<keyword id="KW-1185">Reference proteome</keyword>
<protein>
    <recommendedName>
        <fullName evidence="1">4-hydroxy-3-methylbut-2-en-1-yl diphosphate synthase (flavodoxin)</fullName>
        <ecNumber evidence="1">1.17.7.3</ecNumber>
    </recommendedName>
    <alternativeName>
        <fullName evidence="1">1-hydroxy-2-methyl-2-(E)-butenyl 4-diphosphate synthase</fullName>
    </alternativeName>
</protein>
<proteinExistence type="inferred from homology"/>
<organism>
    <name type="scientific">Mycolicibacterium paratuberculosis (strain ATCC BAA-968 / K-10)</name>
    <name type="common">Mycobacterium paratuberculosis</name>
    <dbReference type="NCBI Taxonomy" id="262316"/>
    <lineage>
        <taxon>Bacteria</taxon>
        <taxon>Bacillati</taxon>
        <taxon>Actinomycetota</taxon>
        <taxon>Actinomycetes</taxon>
        <taxon>Mycobacteriales</taxon>
        <taxon>Mycobacteriaceae</taxon>
        <taxon>Mycobacterium</taxon>
        <taxon>Mycobacterium avium complex (MAC)</taxon>
    </lineage>
</organism>
<name>ISPG_MYCPA</name>
<gene>
    <name evidence="1" type="primary">ispG</name>
    <name type="synonym">gcpE</name>
    <name type="ordered locus">MAP_2938c</name>
</gene>
<dbReference type="EC" id="1.17.7.3" evidence="1"/>
<dbReference type="EMBL" id="AE016958">
    <property type="protein sequence ID" value="AAS05255.1"/>
    <property type="molecule type" value="Genomic_DNA"/>
</dbReference>
<dbReference type="RefSeq" id="WP_003875113.1">
    <property type="nucleotide sequence ID" value="NZ_CP106873.1"/>
</dbReference>
<dbReference type="SMR" id="Q73VS3"/>
<dbReference type="STRING" id="262316.MAP_2938c"/>
<dbReference type="KEGG" id="mpa:MAP_2938c"/>
<dbReference type="eggNOG" id="COG0821">
    <property type="taxonomic scope" value="Bacteria"/>
</dbReference>
<dbReference type="HOGENOM" id="CLU_042258_0_0_11"/>
<dbReference type="UniPathway" id="UPA00056">
    <property type="reaction ID" value="UER00096"/>
</dbReference>
<dbReference type="Proteomes" id="UP000000580">
    <property type="component" value="Chromosome"/>
</dbReference>
<dbReference type="GO" id="GO:0051539">
    <property type="term" value="F:4 iron, 4 sulfur cluster binding"/>
    <property type="evidence" value="ECO:0007669"/>
    <property type="project" value="UniProtKB-UniRule"/>
</dbReference>
<dbReference type="GO" id="GO:0046429">
    <property type="term" value="F:4-hydroxy-3-methylbut-2-en-1-yl diphosphate synthase activity (ferredoxin)"/>
    <property type="evidence" value="ECO:0007669"/>
    <property type="project" value="UniProtKB-UniRule"/>
</dbReference>
<dbReference type="GO" id="GO:0141197">
    <property type="term" value="F:4-hydroxy-3-methylbut-2-enyl-diphosphate synthase activity (flavodoxin)"/>
    <property type="evidence" value="ECO:0007669"/>
    <property type="project" value="UniProtKB-EC"/>
</dbReference>
<dbReference type="GO" id="GO:0005506">
    <property type="term" value="F:iron ion binding"/>
    <property type="evidence" value="ECO:0007669"/>
    <property type="project" value="InterPro"/>
</dbReference>
<dbReference type="GO" id="GO:0019288">
    <property type="term" value="P:isopentenyl diphosphate biosynthetic process, methylerythritol 4-phosphate pathway"/>
    <property type="evidence" value="ECO:0007669"/>
    <property type="project" value="UniProtKB-UniRule"/>
</dbReference>
<dbReference type="GO" id="GO:0016114">
    <property type="term" value="P:terpenoid biosynthetic process"/>
    <property type="evidence" value="ECO:0007669"/>
    <property type="project" value="InterPro"/>
</dbReference>
<dbReference type="FunFam" id="3.20.20.20:FF:000003">
    <property type="entry name" value="4-hydroxy-3-methylbut-2-en-1-yl diphosphate synthase (flavodoxin)"/>
    <property type="match status" value="1"/>
</dbReference>
<dbReference type="FunFam" id="3.30.413.10:FF:000001">
    <property type="entry name" value="4-hydroxy-3-methylbut-2-en-1-yl diphosphate synthase (flavodoxin)"/>
    <property type="match status" value="1"/>
</dbReference>
<dbReference type="Gene3D" id="3.20.20.20">
    <property type="entry name" value="Dihydropteroate synthase-like"/>
    <property type="match status" value="1"/>
</dbReference>
<dbReference type="Gene3D" id="3.30.413.10">
    <property type="entry name" value="Sulfite Reductase Hemoprotein, domain 1"/>
    <property type="match status" value="1"/>
</dbReference>
<dbReference type="HAMAP" id="MF_00159">
    <property type="entry name" value="IspG"/>
    <property type="match status" value="1"/>
</dbReference>
<dbReference type="InterPro" id="IPR011005">
    <property type="entry name" value="Dihydropteroate_synth-like_sf"/>
</dbReference>
<dbReference type="InterPro" id="IPR016425">
    <property type="entry name" value="IspG_bac"/>
</dbReference>
<dbReference type="InterPro" id="IPR004588">
    <property type="entry name" value="IspG_bac-typ"/>
</dbReference>
<dbReference type="InterPro" id="IPR045854">
    <property type="entry name" value="NO2/SO3_Rdtase_4Fe4S_sf"/>
</dbReference>
<dbReference type="NCBIfam" id="TIGR00612">
    <property type="entry name" value="ispG_gcpE"/>
    <property type="match status" value="1"/>
</dbReference>
<dbReference type="NCBIfam" id="NF001540">
    <property type="entry name" value="PRK00366.1"/>
    <property type="match status" value="1"/>
</dbReference>
<dbReference type="PANTHER" id="PTHR30454">
    <property type="entry name" value="4-HYDROXY-3-METHYLBUT-2-EN-1-YL DIPHOSPHATE SYNTHASE"/>
    <property type="match status" value="1"/>
</dbReference>
<dbReference type="PANTHER" id="PTHR30454:SF0">
    <property type="entry name" value="4-HYDROXY-3-METHYLBUT-2-EN-1-YL DIPHOSPHATE SYNTHASE (FERREDOXIN), CHLOROPLASTIC"/>
    <property type="match status" value="1"/>
</dbReference>
<dbReference type="Pfam" id="PF04551">
    <property type="entry name" value="GcpE"/>
    <property type="match status" value="1"/>
</dbReference>
<dbReference type="PIRSF" id="PIRSF004640">
    <property type="entry name" value="IspG"/>
    <property type="match status" value="1"/>
</dbReference>
<dbReference type="SUPFAM" id="SSF51717">
    <property type="entry name" value="Dihydropteroate synthetase-like"/>
    <property type="match status" value="1"/>
</dbReference>
<dbReference type="SUPFAM" id="SSF56014">
    <property type="entry name" value="Nitrite and sulphite reductase 4Fe-4S domain-like"/>
    <property type="match status" value="1"/>
</dbReference>
<evidence type="ECO:0000255" key="1">
    <source>
        <dbReference type="HAMAP-Rule" id="MF_00159"/>
    </source>
</evidence>
<evidence type="ECO:0000256" key="2">
    <source>
        <dbReference type="SAM" id="MobiDB-lite"/>
    </source>
</evidence>
<sequence length="388" mass="40808">MTTGLGMPQTPAPTLAPRRRTRQLMVRDVGVGSDYPISVQSMCTTKTHDVNSTLQQIAELTAAGCDIVRVACPRQEDADALAEIARHSQIPVIADIHFQPKYIFAAIDAGCAAVRVNPGNIKEFDGRVGEVAKAAAAAGIPIRIGVNAGSLDKRFMAKYGKATPEALVESALWEASLFEEHGFSDIKISVKHNDPVVMVAAYEQLAEQCDYPLHLGVTEAGPAFQGTIKSAVAFGALLSRGIGDTIRVSLSAPPVEEVKVGIQILESLNLRPRSLEIVSCPSCGRAQVDVYTLANEVSAGLDGLDVPLRVAVMGCVVNGPGEAREADLGVASGNGKGQIFVRGEVIKTVPESQIVETLIEEAMRIAAQMNSEGGPEATSSGSPVVTVS</sequence>